<feature type="chain" id="PRO_0000169695" description="Cell division protein ZapB">
    <location>
        <begin position="1"/>
        <end position="81"/>
    </location>
</feature>
<feature type="region of interest" description="Disordered" evidence="2">
    <location>
        <begin position="36"/>
        <end position="67"/>
    </location>
</feature>
<feature type="coiled-coil region" evidence="1">
    <location>
        <begin position="5"/>
        <end position="81"/>
    </location>
</feature>
<feature type="compositionally biased region" description="Polar residues" evidence="2">
    <location>
        <begin position="37"/>
        <end position="47"/>
    </location>
</feature>
<feature type="compositionally biased region" description="Basic and acidic residues" evidence="2">
    <location>
        <begin position="48"/>
        <end position="62"/>
    </location>
</feature>
<feature type="modified residue" description="N6-acetyllysine" evidence="1">
    <location>
        <position position="10"/>
    </location>
</feature>
<keyword id="KW-0007">Acetylation</keyword>
<keyword id="KW-0131">Cell cycle</keyword>
<keyword id="KW-0132">Cell division</keyword>
<keyword id="KW-0175">Coiled coil</keyword>
<keyword id="KW-0963">Cytoplasm</keyword>
<keyword id="KW-1185">Reference proteome</keyword>
<keyword id="KW-0717">Septation</keyword>
<sequence>MTMSLEVFEKLEAKVQQAIDTITLLQMEIEELKEKNNSLSQEVQNAQHQREELERENNHLKEQQNGWQERLQALLGRMEEV</sequence>
<proteinExistence type="inferred from homology"/>
<organism>
    <name type="scientific">Escherichia coli O6:H1 (strain CFT073 / ATCC 700928 / UPEC)</name>
    <dbReference type="NCBI Taxonomy" id="199310"/>
    <lineage>
        <taxon>Bacteria</taxon>
        <taxon>Pseudomonadati</taxon>
        <taxon>Pseudomonadota</taxon>
        <taxon>Gammaproteobacteria</taxon>
        <taxon>Enterobacterales</taxon>
        <taxon>Enterobacteriaceae</taxon>
        <taxon>Escherichia</taxon>
    </lineage>
</organism>
<reference key="1">
    <citation type="journal article" date="2002" name="Proc. Natl. Acad. Sci. U.S.A.">
        <title>Extensive mosaic structure revealed by the complete genome sequence of uropathogenic Escherichia coli.</title>
        <authorList>
            <person name="Welch R.A."/>
            <person name="Burland V."/>
            <person name="Plunkett G. III"/>
            <person name="Redford P."/>
            <person name="Roesch P."/>
            <person name="Rasko D."/>
            <person name="Buckles E.L."/>
            <person name="Liou S.-R."/>
            <person name="Boutin A."/>
            <person name="Hackett J."/>
            <person name="Stroud D."/>
            <person name="Mayhew G.F."/>
            <person name="Rose D.J."/>
            <person name="Zhou S."/>
            <person name="Schwartz D.C."/>
            <person name="Perna N.T."/>
            <person name="Mobley H.L.T."/>
            <person name="Donnenberg M.S."/>
            <person name="Blattner F.R."/>
        </authorList>
    </citation>
    <scope>NUCLEOTIDE SEQUENCE [LARGE SCALE GENOMIC DNA]</scope>
    <source>
        <strain>CFT073 / ATCC 700928 / UPEC</strain>
    </source>
</reference>
<dbReference type="EMBL" id="AE014075">
    <property type="protein sequence ID" value="AAN83308.1"/>
    <property type="status" value="ALT_INIT"/>
    <property type="molecule type" value="Genomic_DNA"/>
</dbReference>
<dbReference type="RefSeq" id="WP_001296623.1">
    <property type="nucleotide sequence ID" value="NZ_CP051263.1"/>
</dbReference>
<dbReference type="SMR" id="P0AF37"/>
<dbReference type="STRING" id="199310.c4880"/>
<dbReference type="GeneID" id="93777970"/>
<dbReference type="KEGG" id="ecc:c4880"/>
<dbReference type="eggNOG" id="COG3074">
    <property type="taxonomic scope" value="Bacteria"/>
</dbReference>
<dbReference type="HOGENOM" id="CLU_171174_2_0_6"/>
<dbReference type="Proteomes" id="UP000001410">
    <property type="component" value="Chromosome"/>
</dbReference>
<dbReference type="GO" id="GO:0005737">
    <property type="term" value="C:cytoplasm"/>
    <property type="evidence" value="ECO:0007669"/>
    <property type="project" value="UniProtKB-SubCell"/>
</dbReference>
<dbReference type="GO" id="GO:0000917">
    <property type="term" value="P:division septum assembly"/>
    <property type="evidence" value="ECO:0007669"/>
    <property type="project" value="UniProtKB-KW"/>
</dbReference>
<dbReference type="GO" id="GO:0043093">
    <property type="term" value="P:FtsZ-dependent cytokinesis"/>
    <property type="evidence" value="ECO:0007669"/>
    <property type="project" value="UniProtKB-UniRule"/>
</dbReference>
<dbReference type="FunFam" id="1.20.5.340:FF:000014">
    <property type="entry name" value="Cell division protein ZapB"/>
    <property type="match status" value="1"/>
</dbReference>
<dbReference type="Gene3D" id="1.20.5.340">
    <property type="match status" value="1"/>
</dbReference>
<dbReference type="HAMAP" id="MF_01196">
    <property type="entry name" value="ZapB"/>
    <property type="match status" value="1"/>
</dbReference>
<dbReference type="InterPro" id="IPR009252">
    <property type="entry name" value="Cell_div_ZapB"/>
</dbReference>
<dbReference type="NCBIfam" id="NF011951">
    <property type="entry name" value="PRK15422.1"/>
    <property type="match status" value="1"/>
</dbReference>
<dbReference type="Pfam" id="PF06005">
    <property type="entry name" value="ZapB"/>
    <property type="match status" value="1"/>
</dbReference>
<protein>
    <recommendedName>
        <fullName evidence="1">Cell division protein ZapB</fullName>
    </recommendedName>
</protein>
<accession>P0AF37</accession>
<accession>P32164</accession>
<gene>
    <name evidence="1" type="primary">zapB</name>
    <name type="synonym">yiiU</name>
    <name type="ordered locus">c4880</name>
</gene>
<evidence type="ECO:0000255" key="1">
    <source>
        <dbReference type="HAMAP-Rule" id="MF_01196"/>
    </source>
</evidence>
<evidence type="ECO:0000256" key="2">
    <source>
        <dbReference type="SAM" id="MobiDB-lite"/>
    </source>
</evidence>
<evidence type="ECO:0000305" key="3"/>
<name>ZAPB_ECOL6</name>
<comment type="function">
    <text evidence="1">Non-essential, abundant cell division factor that is required for proper Z-ring formation. It is recruited early to the divisome by direct interaction with FtsZ, stimulating Z-ring assembly and thereby promoting cell division earlier in the cell cycle. Its recruitment to the Z-ring requires functional FtsA or ZipA.</text>
</comment>
<comment type="subunit">
    <text evidence="1">Homodimer. The ends of the coiled-coil dimer bind to each other, forming polymers. Interacts with FtsZ.</text>
</comment>
<comment type="subcellular location">
    <subcellularLocation>
        <location>Cytoplasm</location>
    </subcellularLocation>
    <text evidence="1">Localizes to the septum at mid-cell, in a FtsZ-like pattern.</text>
</comment>
<comment type="similarity">
    <text evidence="1">Belongs to the ZapB family.</text>
</comment>
<comment type="sequence caution" evidence="3">
    <conflict type="erroneous initiation">
        <sequence resource="EMBL-CDS" id="AAN83308"/>
    </conflict>
</comment>